<keyword id="KW-0067">ATP-binding</keyword>
<keyword id="KW-0963">Cytoplasm</keyword>
<keyword id="KW-0460">Magnesium</keyword>
<keyword id="KW-0479">Metal-binding</keyword>
<keyword id="KW-0547">Nucleotide-binding</keyword>
<keyword id="KW-0554">One-carbon metabolism</keyword>
<keyword id="KW-0630">Potassium</keyword>
<keyword id="KW-1185">Reference proteome</keyword>
<keyword id="KW-0808">Transferase</keyword>
<sequence>MSKRLFTSESVTEGHPDKICDAISDTILDAMLTEDPQARVAVETVVTTGLVHVVGEVRTSGYVEIPQLVRDTLKEIGFTSSDMGFDGTTCGVSVSIGAQSPEIGAGVDTSHEVRGSSSTDEDDRQGAGDQGLMFGYATNETPEYMPLPISVAHRLSRRLTEVRKEEIVTGLRPDGKTQVTFEYDDAGTPVRLDTVVISTQHDPERTQDELRELLSEHVVGHVLADESLKPFVTEDLNLLVNPSGSFILGGPAGDAGLTGRKIIVDTYGGMARHGGGAFSGKDPSKVDRSAAYATRWVAKNIVAAGLADRAEVQVAYAIGVARPVGLYVETFGTEKAPVEDIQRAVAEVFDLRPASILRELDLLRPIYAQTAAYGHFGRNDLDLPWERLDKVEELKKAVGGN</sequence>
<name>METK_CORU7</name>
<reference key="1">
    <citation type="journal article" date="2008" name="J. Biotechnol.">
        <title>The lifestyle of Corynebacterium urealyticum derived from its complete genome sequence established by pyrosequencing.</title>
        <authorList>
            <person name="Tauch A."/>
            <person name="Trost E."/>
            <person name="Tilker A."/>
            <person name="Ludewig U."/>
            <person name="Schneiker S."/>
            <person name="Goesmann A."/>
            <person name="Arnold W."/>
            <person name="Bekel T."/>
            <person name="Brinkrolf K."/>
            <person name="Brune I."/>
            <person name="Goetker S."/>
            <person name="Kalinowski J."/>
            <person name="Kamp P.-B."/>
            <person name="Lobo F.P."/>
            <person name="Viehoever P."/>
            <person name="Weisshaar B."/>
            <person name="Soriano F."/>
            <person name="Droege M."/>
            <person name="Puehler A."/>
        </authorList>
    </citation>
    <scope>NUCLEOTIDE SEQUENCE [LARGE SCALE GENOMIC DNA]</scope>
    <source>
        <strain>ATCC 43042 / DSM 7109</strain>
    </source>
</reference>
<evidence type="ECO:0000255" key="1">
    <source>
        <dbReference type="HAMAP-Rule" id="MF_00086"/>
    </source>
</evidence>
<evidence type="ECO:0000256" key="2">
    <source>
        <dbReference type="SAM" id="MobiDB-lite"/>
    </source>
</evidence>
<protein>
    <recommendedName>
        <fullName evidence="1">S-adenosylmethionine synthase</fullName>
        <shortName evidence="1">AdoMet synthase</shortName>
        <ecNumber evidence="1">2.5.1.6</ecNumber>
    </recommendedName>
    <alternativeName>
        <fullName evidence="1">MAT</fullName>
    </alternativeName>
    <alternativeName>
        <fullName evidence="1">Methionine adenosyltransferase</fullName>
    </alternativeName>
</protein>
<comment type="function">
    <text evidence="1">Catalyzes the formation of S-adenosylmethionine (AdoMet) from methionine and ATP. The overall synthetic reaction is composed of two sequential steps, AdoMet formation and the subsequent tripolyphosphate hydrolysis which occurs prior to release of AdoMet from the enzyme.</text>
</comment>
<comment type="catalytic activity">
    <reaction evidence="1">
        <text>L-methionine + ATP + H2O = S-adenosyl-L-methionine + phosphate + diphosphate</text>
        <dbReference type="Rhea" id="RHEA:21080"/>
        <dbReference type="ChEBI" id="CHEBI:15377"/>
        <dbReference type="ChEBI" id="CHEBI:30616"/>
        <dbReference type="ChEBI" id="CHEBI:33019"/>
        <dbReference type="ChEBI" id="CHEBI:43474"/>
        <dbReference type="ChEBI" id="CHEBI:57844"/>
        <dbReference type="ChEBI" id="CHEBI:59789"/>
        <dbReference type="EC" id="2.5.1.6"/>
    </reaction>
</comment>
<comment type="cofactor">
    <cofactor evidence="1">
        <name>Mg(2+)</name>
        <dbReference type="ChEBI" id="CHEBI:18420"/>
    </cofactor>
    <text evidence="1">Binds 2 divalent ions per subunit.</text>
</comment>
<comment type="cofactor">
    <cofactor evidence="1">
        <name>K(+)</name>
        <dbReference type="ChEBI" id="CHEBI:29103"/>
    </cofactor>
    <text evidence="1">Binds 1 potassium ion per subunit.</text>
</comment>
<comment type="pathway">
    <text evidence="1">Amino-acid biosynthesis; S-adenosyl-L-methionine biosynthesis; S-adenosyl-L-methionine from L-methionine: step 1/1.</text>
</comment>
<comment type="subunit">
    <text evidence="1">Homotetramer; dimer of dimers.</text>
</comment>
<comment type="subcellular location">
    <subcellularLocation>
        <location evidence="1">Cytoplasm</location>
    </subcellularLocation>
</comment>
<comment type="similarity">
    <text evidence="1">Belongs to the AdoMet synthase family.</text>
</comment>
<organism>
    <name type="scientific">Corynebacterium urealyticum (strain ATCC 43042 / DSM 7109)</name>
    <dbReference type="NCBI Taxonomy" id="504474"/>
    <lineage>
        <taxon>Bacteria</taxon>
        <taxon>Bacillati</taxon>
        <taxon>Actinomycetota</taxon>
        <taxon>Actinomycetes</taxon>
        <taxon>Mycobacteriales</taxon>
        <taxon>Corynebacteriaceae</taxon>
        <taxon>Corynebacterium</taxon>
    </lineage>
</organism>
<gene>
    <name evidence="1" type="primary">metK</name>
    <name type="ordered locus">cu0975</name>
</gene>
<proteinExistence type="inferred from homology"/>
<accession>B1VDN7</accession>
<feature type="chain" id="PRO_1000093040" description="S-adenosylmethionine synthase">
    <location>
        <begin position="1"/>
        <end position="401"/>
    </location>
</feature>
<feature type="region of interest" description="Flexible loop" evidence="1">
    <location>
        <begin position="99"/>
        <end position="109"/>
    </location>
</feature>
<feature type="region of interest" description="Disordered" evidence="2">
    <location>
        <begin position="101"/>
        <end position="132"/>
    </location>
</feature>
<feature type="binding site" description="in other chain" evidence="1">
    <location>
        <position position="15"/>
    </location>
    <ligand>
        <name>ATP</name>
        <dbReference type="ChEBI" id="CHEBI:30616"/>
        <note>ligand shared between two neighboring subunits</note>
    </ligand>
</feature>
<feature type="binding site" evidence="1">
    <location>
        <position position="17"/>
    </location>
    <ligand>
        <name>Mg(2+)</name>
        <dbReference type="ChEBI" id="CHEBI:18420"/>
    </ligand>
</feature>
<feature type="binding site" evidence="1">
    <location>
        <position position="43"/>
    </location>
    <ligand>
        <name>K(+)</name>
        <dbReference type="ChEBI" id="CHEBI:29103"/>
    </ligand>
</feature>
<feature type="binding site" description="in other chain" evidence="1">
    <location>
        <position position="56"/>
    </location>
    <ligand>
        <name>L-methionine</name>
        <dbReference type="ChEBI" id="CHEBI:57844"/>
        <note>ligand shared between two neighboring subunits</note>
    </ligand>
</feature>
<feature type="binding site" description="in other chain" evidence="1">
    <location>
        <position position="99"/>
    </location>
    <ligand>
        <name>L-methionine</name>
        <dbReference type="ChEBI" id="CHEBI:57844"/>
        <note>ligand shared between two neighboring subunits</note>
    </ligand>
</feature>
<feature type="binding site" description="in other chain" evidence="1">
    <location>
        <begin position="174"/>
        <end position="176"/>
    </location>
    <ligand>
        <name>ATP</name>
        <dbReference type="ChEBI" id="CHEBI:30616"/>
        <note>ligand shared between two neighboring subunits</note>
    </ligand>
</feature>
<feature type="binding site" evidence="1">
    <location>
        <position position="254"/>
    </location>
    <ligand>
        <name>ATP</name>
        <dbReference type="ChEBI" id="CHEBI:30616"/>
        <note>ligand shared between two neighboring subunits</note>
    </ligand>
</feature>
<feature type="binding site" evidence="1">
    <location>
        <position position="254"/>
    </location>
    <ligand>
        <name>L-methionine</name>
        <dbReference type="ChEBI" id="CHEBI:57844"/>
        <note>ligand shared between two neighboring subunits</note>
    </ligand>
</feature>
<feature type="binding site" description="in other chain" evidence="1">
    <location>
        <begin position="260"/>
        <end position="261"/>
    </location>
    <ligand>
        <name>ATP</name>
        <dbReference type="ChEBI" id="CHEBI:30616"/>
        <note>ligand shared between two neighboring subunits</note>
    </ligand>
</feature>
<feature type="binding site" evidence="1">
    <location>
        <position position="277"/>
    </location>
    <ligand>
        <name>ATP</name>
        <dbReference type="ChEBI" id="CHEBI:30616"/>
        <note>ligand shared between two neighboring subunits</note>
    </ligand>
</feature>
<feature type="binding site" evidence="1">
    <location>
        <position position="281"/>
    </location>
    <ligand>
        <name>ATP</name>
        <dbReference type="ChEBI" id="CHEBI:30616"/>
        <note>ligand shared between two neighboring subunits</note>
    </ligand>
</feature>
<feature type="binding site" description="in other chain" evidence="1">
    <location>
        <position position="285"/>
    </location>
    <ligand>
        <name>L-methionine</name>
        <dbReference type="ChEBI" id="CHEBI:57844"/>
        <note>ligand shared between two neighboring subunits</note>
    </ligand>
</feature>
<dbReference type="EC" id="2.5.1.6" evidence="1"/>
<dbReference type="EMBL" id="AM942444">
    <property type="protein sequence ID" value="CAQ04935.1"/>
    <property type="molecule type" value="Genomic_DNA"/>
</dbReference>
<dbReference type="RefSeq" id="WP_012360223.1">
    <property type="nucleotide sequence ID" value="NC_010545.1"/>
</dbReference>
<dbReference type="SMR" id="B1VDN7"/>
<dbReference type="STRING" id="504474.cu0975"/>
<dbReference type="GeneID" id="60603754"/>
<dbReference type="KEGG" id="cur:cu0975"/>
<dbReference type="eggNOG" id="COG0192">
    <property type="taxonomic scope" value="Bacteria"/>
</dbReference>
<dbReference type="HOGENOM" id="CLU_041802_1_1_11"/>
<dbReference type="UniPathway" id="UPA00315">
    <property type="reaction ID" value="UER00080"/>
</dbReference>
<dbReference type="Proteomes" id="UP000001727">
    <property type="component" value="Chromosome"/>
</dbReference>
<dbReference type="GO" id="GO:0005737">
    <property type="term" value="C:cytoplasm"/>
    <property type="evidence" value="ECO:0007669"/>
    <property type="project" value="UniProtKB-SubCell"/>
</dbReference>
<dbReference type="GO" id="GO:0005524">
    <property type="term" value="F:ATP binding"/>
    <property type="evidence" value="ECO:0007669"/>
    <property type="project" value="UniProtKB-UniRule"/>
</dbReference>
<dbReference type="GO" id="GO:0000287">
    <property type="term" value="F:magnesium ion binding"/>
    <property type="evidence" value="ECO:0007669"/>
    <property type="project" value="UniProtKB-UniRule"/>
</dbReference>
<dbReference type="GO" id="GO:0004478">
    <property type="term" value="F:methionine adenosyltransferase activity"/>
    <property type="evidence" value="ECO:0007669"/>
    <property type="project" value="UniProtKB-UniRule"/>
</dbReference>
<dbReference type="GO" id="GO:0006730">
    <property type="term" value="P:one-carbon metabolic process"/>
    <property type="evidence" value="ECO:0007669"/>
    <property type="project" value="UniProtKB-KW"/>
</dbReference>
<dbReference type="GO" id="GO:0006556">
    <property type="term" value="P:S-adenosylmethionine biosynthetic process"/>
    <property type="evidence" value="ECO:0007669"/>
    <property type="project" value="UniProtKB-UniRule"/>
</dbReference>
<dbReference type="CDD" id="cd18079">
    <property type="entry name" value="S-AdoMet_synt"/>
    <property type="match status" value="1"/>
</dbReference>
<dbReference type="FunFam" id="3.30.300.10:FF:000003">
    <property type="entry name" value="S-adenosylmethionine synthase"/>
    <property type="match status" value="1"/>
</dbReference>
<dbReference type="Gene3D" id="3.30.300.10">
    <property type="match status" value="3"/>
</dbReference>
<dbReference type="HAMAP" id="MF_00086">
    <property type="entry name" value="S_AdoMet_synth1"/>
    <property type="match status" value="1"/>
</dbReference>
<dbReference type="InterPro" id="IPR022631">
    <property type="entry name" value="ADOMET_SYNTHASE_CS"/>
</dbReference>
<dbReference type="InterPro" id="IPR022630">
    <property type="entry name" value="S-AdoMet_synt_C"/>
</dbReference>
<dbReference type="InterPro" id="IPR022629">
    <property type="entry name" value="S-AdoMet_synt_central"/>
</dbReference>
<dbReference type="InterPro" id="IPR022628">
    <property type="entry name" value="S-AdoMet_synt_N"/>
</dbReference>
<dbReference type="InterPro" id="IPR002133">
    <property type="entry name" value="S-AdoMet_synthetase"/>
</dbReference>
<dbReference type="InterPro" id="IPR022636">
    <property type="entry name" value="S-AdoMet_synthetase_sfam"/>
</dbReference>
<dbReference type="NCBIfam" id="TIGR01034">
    <property type="entry name" value="metK"/>
    <property type="match status" value="1"/>
</dbReference>
<dbReference type="PANTHER" id="PTHR11964">
    <property type="entry name" value="S-ADENOSYLMETHIONINE SYNTHETASE"/>
    <property type="match status" value="1"/>
</dbReference>
<dbReference type="Pfam" id="PF02773">
    <property type="entry name" value="S-AdoMet_synt_C"/>
    <property type="match status" value="1"/>
</dbReference>
<dbReference type="Pfam" id="PF02772">
    <property type="entry name" value="S-AdoMet_synt_M"/>
    <property type="match status" value="1"/>
</dbReference>
<dbReference type="Pfam" id="PF00438">
    <property type="entry name" value="S-AdoMet_synt_N"/>
    <property type="match status" value="1"/>
</dbReference>
<dbReference type="PIRSF" id="PIRSF000497">
    <property type="entry name" value="MAT"/>
    <property type="match status" value="1"/>
</dbReference>
<dbReference type="SUPFAM" id="SSF55973">
    <property type="entry name" value="S-adenosylmethionine synthetase"/>
    <property type="match status" value="3"/>
</dbReference>
<dbReference type="PROSITE" id="PS00376">
    <property type="entry name" value="ADOMET_SYNTHASE_1"/>
    <property type="match status" value="1"/>
</dbReference>
<dbReference type="PROSITE" id="PS00377">
    <property type="entry name" value="ADOMET_SYNTHASE_2"/>
    <property type="match status" value="1"/>
</dbReference>